<reference key="1">
    <citation type="journal article" date="2006" name="Plant Cell Rep.">
        <title>The complete chloroplast genome sequences of Solanum tuberosum and comparative analysis with Solanaceae species identified the presence of a 241-bp deletion in cultivated potato chloroplast DNA sequence.</title>
        <authorList>
            <person name="Chung H.-J."/>
            <person name="Jung J.D."/>
            <person name="Park H.-W."/>
            <person name="Kim J.-H."/>
            <person name="Cha H.W."/>
            <person name="Min S.R."/>
            <person name="Jeong W.-J."/>
            <person name="Liu J.R."/>
        </authorList>
    </citation>
    <scope>NUCLEOTIDE SEQUENCE [LARGE SCALE GENOMIC DNA]</scope>
    <source>
        <strain>cv. Desiree</strain>
    </source>
</reference>
<reference key="2">
    <citation type="submission" date="2006-02" db="EMBL/GenBank/DDBJ databases">
        <title>Complete chloroplast genome sequences of Solanum tuberosum cultivar Desiree and comparative analyses with other Solanaceae genomes.</title>
        <authorList>
            <person name="Gargano D."/>
            <person name="Scotti N."/>
            <person name="Vezzi A."/>
            <person name="Bilardi A."/>
            <person name="Valle G."/>
            <person name="Grillo S."/>
            <person name="Cardi T."/>
        </authorList>
    </citation>
    <scope>NUCLEOTIDE SEQUENCE [LARGE SCALE GENOMIC DNA]</scope>
    <source>
        <strain>cv. Desiree</strain>
    </source>
</reference>
<keyword id="KW-0004">4Fe-4S</keyword>
<keyword id="KW-0150">Chloroplast</keyword>
<keyword id="KW-0249">Electron transport</keyword>
<keyword id="KW-0408">Iron</keyword>
<keyword id="KW-0411">Iron-sulfur</keyword>
<keyword id="KW-0472">Membrane</keyword>
<keyword id="KW-0479">Metal-binding</keyword>
<keyword id="KW-0560">Oxidoreductase</keyword>
<keyword id="KW-0602">Photosynthesis</keyword>
<keyword id="KW-0603">Photosystem I</keyword>
<keyword id="KW-0934">Plastid</keyword>
<keyword id="KW-1185">Reference proteome</keyword>
<keyword id="KW-0677">Repeat</keyword>
<keyword id="KW-0793">Thylakoid</keyword>
<keyword id="KW-0813">Transport</keyword>
<protein>
    <recommendedName>
        <fullName evidence="2">Photosystem I iron-sulfur center</fullName>
        <ecNumber evidence="2">1.97.1.12</ecNumber>
    </recommendedName>
    <alternativeName>
        <fullName evidence="2">9 kDa polypeptide</fullName>
    </alternativeName>
    <alternativeName>
        <fullName evidence="2">PSI-C</fullName>
    </alternativeName>
    <alternativeName>
        <fullName evidence="2">Photosystem I subunit VII</fullName>
    </alternativeName>
    <alternativeName>
        <fullName evidence="2">PsaC</fullName>
    </alternativeName>
</protein>
<feature type="initiator methionine" description="Removed" evidence="1">
    <location>
        <position position="1"/>
    </location>
</feature>
<feature type="chain" id="PRO_0000276001" description="Photosystem I iron-sulfur center">
    <location>
        <begin position="2"/>
        <end position="81"/>
    </location>
</feature>
<feature type="domain" description="4Fe-4S ferredoxin-type 1" evidence="2">
    <location>
        <begin position="2"/>
        <end position="31"/>
    </location>
</feature>
<feature type="domain" description="4Fe-4S ferredoxin-type 2" evidence="2">
    <location>
        <begin position="39"/>
        <end position="68"/>
    </location>
</feature>
<feature type="binding site" evidence="2">
    <location>
        <position position="11"/>
    </location>
    <ligand>
        <name>[4Fe-4S] cluster</name>
        <dbReference type="ChEBI" id="CHEBI:49883"/>
        <label>1</label>
    </ligand>
</feature>
<feature type="binding site" evidence="2">
    <location>
        <position position="14"/>
    </location>
    <ligand>
        <name>[4Fe-4S] cluster</name>
        <dbReference type="ChEBI" id="CHEBI:49883"/>
        <label>1</label>
    </ligand>
</feature>
<feature type="binding site" evidence="2">
    <location>
        <position position="17"/>
    </location>
    <ligand>
        <name>[4Fe-4S] cluster</name>
        <dbReference type="ChEBI" id="CHEBI:49883"/>
        <label>1</label>
    </ligand>
</feature>
<feature type="binding site" evidence="2">
    <location>
        <position position="21"/>
    </location>
    <ligand>
        <name>[4Fe-4S] cluster</name>
        <dbReference type="ChEBI" id="CHEBI:49883"/>
        <label>2</label>
    </ligand>
</feature>
<feature type="binding site" evidence="2">
    <location>
        <position position="48"/>
    </location>
    <ligand>
        <name>[4Fe-4S] cluster</name>
        <dbReference type="ChEBI" id="CHEBI:49883"/>
        <label>2</label>
    </ligand>
</feature>
<feature type="binding site" evidence="2">
    <location>
        <position position="51"/>
    </location>
    <ligand>
        <name>[4Fe-4S] cluster</name>
        <dbReference type="ChEBI" id="CHEBI:49883"/>
        <label>2</label>
    </ligand>
</feature>
<feature type="binding site" evidence="2">
    <location>
        <position position="54"/>
    </location>
    <ligand>
        <name>[4Fe-4S] cluster</name>
        <dbReference type="ChEBI" id="CHEBI:49883"/>
        <label>2</label>
    </ligand>
</feature>
<feature type="binding site" evidence="2">
    <location>
        <position position="58"/>
    </location>
    <ligand>
        <name>[4Fe-4S] cluster</name>
        <dbReference type="ChEBI" id="CHEBI:49883"/>
        <label>1</label>
    </ligand>
</feature>
<sequence>MSHSVKIYDTCIGCTQCVRACPTDVLEMIPWDGCKAKQIASAPRTEDCVGCKRCESACPTDFLSVRVYLWHETTRSMGLAY</sequence>
<organism>
    <name type="scientific">Solanum tuberosum</name>
    <name type="common">Potato</name>
    <dbReference type="NCBI Taxonomy" id="4113"/>
    <lineage>
        <taxon>Eukaryota</taxon>
        <taxon>Viridiplantae</taxon>
        <taxon>Streptophyta</taxon>
        <taxon>Embryophyta</taxon>
        <taxon>Tracheophyta</taxon>
        <taxon>Spermatophyta</taxon>
        <taxon>Magnoliopsida</taxon>
        <taxon>eudicotyledons</taxon>
        <taxon>Gunneridae</taxon>
        <taxon>Pentapetalae</taxon>
        <taxon>asterids</taxon>
        <taxon>lamiids</taxon>
        <taxon>Solanales</taxon>
        <taxon>Solanaceae</taxon>
        <taxon>Solanoideae</taxon>
        <taxon>Solaneae</taxon>
        <taxon>Solanum</taxon>
    </lineage>
</organism>
<dbReference type="EC" id="1.97.1.12" evidence="2"/>
<dbReference type="EMBL" id="DQ231562">
    <property type="protein sequence ID" value="ABB90089.1"/>
    <property type="molecule type" value="Genomic_DNA"/>
</dbReference>
<dbReference type="EMBL" id="DQ386163">
    <property type="protein sequence ID" value="ABD47108.1"/>
    <property type="molecule type" value="Genomic_DNA"/>
</dbReference>
<dbReference type="RefSeq" id="YP_635690.1">
    <property type="nucleotide sequence ID" value="NC_008096.2"/>
</dbReference>
<dbReference type="SMR" id="Q2VEC9"/>
<dbReference type="FunCoup" id="Q2VEC9">
    <property type="interactions" value="289"/>
</dbReference>
<dbReference type="STRING" id="4113.Q2VEC9"/>
<dbReference type="GeneID" id="4099906"/>
<dbReference type="KEGG" id="sot:4099906"/>
<dbReference type="InParanoid" id="Q2VEC9"/>
<dbReference type="OrthoDB" id="9at2759"/>
<dbReference type="Proteomes" id="UP000011115">
    <property type="component" value="Unassembled WGS sequence"/>
</dbReference>
<dbReference type="GO" id="GO:0009535">
    <property type="term" value="C:chloroplast thylakoid membrane"/>
    <property type="evidence" value="ECO:0007669"/>
    <property type="project" value="UniProtKB-SubCell"/>
</dbReference>
<dbReference type="GO" id="GO:0009522">
    <property type="term" value="C:photosystem I"/>
    <property type="evidence" value="ECO:0007669"/>
    <property type="project" value="UniProtKB-KW"/>
</dbReference>
<dbReference type="GO" id="GO:0051539">
    <property type="term" value="F:4 iron, 4 sulfur cluster binding"/>
    <property type="evidence" value="ECO:0007669"/>
    <property type="project" value="UniProtKB-KW"/>
</dbReference>
<dbReference type="GO" id="GO:0009055">
    <property type="term" value="F:electron transfer activity"/>
    <property type="evidence" value="ECO:0007669"/>
    <property type="project" value="UniProtKB-UniRule"/>
</dbReference>
<dbReference type="GO" id="GO:0046872">
    <property type="term" value="F:metal ion binding"/>
    <property type="evidence" value="ECO:0007669"/>
    <property type="project" value="UniProtKB-KW"/>
</dbReference>
<dbReference type="GO" id="GO:0016491">
    <property type="term" value="F:oxidoreductase activity"/>
    <property type="evidence" value="ECO:0007669"/>
    <property type="project" value="UniProtKB-KW"/>
</dbReference>
<dbReference type="GO" id="GO:0015979">
    <property type="term" value="P:photosynthesis"/>
    <property type="evidence" value="ECO:0000318"/>
    <property type="project" value="GO_Central"/>
</dbReference>
<dbReference type="GO" id="GO:0009773">
    <property type="term" value="P:photosynthetic electron transport in photosystem I"/>
    <property type="evidence" value="ECO:0007669"/>
    <property type="project" value="InterPro"/>
</dbReference>
<dbReference type="FunFam" id="3.30.70.20:FF:000001">
    <property type="entry name" value="Photosystem I iron-sulfur center"/>
    <property type="match status" value="1"/>
</dbReference>
<dbReference type="Gene3D" id="3.30.70.20">
    <property type="match status" value="1"/>
</dbReference>
<dbReference type="HAMAP" id="MF_01303">
    <property type="entry name" value="PSI_PsaC"/>
    <property type="match status" value="1"/>
</dbReference>
<dbReference type="InterPro" id="IPR017896">
    <property type="entry name" value="4Fe4S_Fe-S-bd"/>
</dbReference>
<dbReference type="InterPro" id="IPR017900">
    <property type="entry name" value="4Fe4S_Fe_S_CS"/>
</dbReference>
<dbReference type="InterPro" id="IPR050157">
    <property type="entry name" value="PSI_iron-sulfur_center"/>
</dbReference>
<dbReference type="InterPro" id="IPR017491">
    <property type="entry name" value="PSI_PsaC"/>
</dbReference>
<dbReference type="NCBIfam" id="TIGR03048">
    <property type="entry name" value="PS_I_psaC"/>
    <property type="match status" value="1"/>
</dbReference>
<dbReference type="PANTHER" id="PTHR24960:SF79">
    <property type="entry name" value="PHOTOSYSTEM I IRON-SULFUR CENTER"/>
    <property type="match status" value="1"/>
</dbReference>
<dbReference type="PANTHER" id="PTHR24960">
    <property type="entry name" value="PHOTOSYSTEM I IRON-SULFUR CENTER-RELATED"/>
    <property type="match status" value="1"/>
</dbReference>
<dbReference type="Pfam" id="PF14697">
    <property type="entry name" value="Fer4_21"/>
    <property type="match status" value="1"/>
</dbReference>
<dbReference type="SUPFAM" id="SSF54862">
    <property type="entry name" value="4Fe-4S ferredoxins"/>
    <property type="match status" value="1"/>
</dbReference>
<dbReference type="PROSITE" id="PS00198">
    <property type="entry name" value="4FE4S_FER_1"/>
    <property type="match status" value="2"/>
</dbReference>
<dbReference type="PROSITE" id="PS51379">
    <property type="entry name" value="4FE4S_FER_2"/>
    <property type="match status" value="2"/>
</dbReference>
<accession>Q2VEC9</accession>
<name>PSAC_SOLTU</name>
<proteinExistence type="inferred from homology"/>
<evidence type="ECO:0000250" key="1"/>
<evidence type="ECO:0000255" key="2">
    <source>
        <dbReference type="HAMAP-Rule" id="MF_01303"/>
    </source>
</evidence>
<comment type="function">
    <text evidence="2">Apoprotein for the two 4Fe-4S centers FA and FB of photosystem I (PSI); essential for photochemical activity. FB is the terminal electron acceptor of PSI, donating electrons to ferredoxin. The C-terminus interacts with PsaA/B/D and helps assemble the protein into the PSI complex. Required for binding of PsaD and PsaE to PSI. PSI is a plastocyanin-ferredoxin oxidoreductase, converting photonic excitation into a charge separation, which transfers an electron from the donor P700 chlorophyll pair to the spectroscopically characterized acceptors A0, A1, FX, FA and FB in turn.</text>
</comment>
<comment type="catalytic activity">
    <reaction evidence="2">
        <text>reduced [plastocyanin] + hnu + oxidized [2Fe-2S]-[ferredoxin] = oxidized [plastocyanin] + reduced [2Fe-2S]-[ferredoxin]</text>
        <dbReference type="Rhea" id="RHEA:30407"/>
        <dbReference type="Rhea" id="RHEA-COMP:10000"/>
        <dbReference type="Rhea" id="RHEA-COMP:10001"/>
        <dbReference type="Rhea" id="RHEA-COMP:10039"/>
        <dbReference type="Rhea" id="RHEA-COMP:10040"/>
        <dbReference type="ChEBI" id="CHEBI:29036"/>
        <dbReference type="ChEBI" id="CHEBI:30212"/>
        <dbReference type="ChEBI" id="CHEBI:33737"/>
        <dbReference type="ChEBI" id="CHEBI:33738"/>
        <dbReference type="ChEBI" id="CHEBI:49552"/>
        <dbReference type="EC" id="1.97.1.12"/>
    </reaction>
</comment>
<comment type="cofactor">
    <cofactor evidence="2">
        <name>[4Fe-4S] cluster</name>
        <dbReference type="ChEBI" id="CHEBI:49883"/>
    </cofactor>
    <text evidence="2">Binds 2 [4Fe-4S] clusters. Cluster 2 is most probably the spectroscopically characterized electron acceptor FA and cluster 1 is most probably FB.</text>
</comment>
<comment type="subunit">
    <text evidence="2">The eukaryotic PSI reaction center is composed of at least 11 subunits.</text>
</comment>
<comment type="subcellular location">
    <subcellularLocation>
        <location evidence="2">Plastid</location>
        <location evidence="2">Chloroplast thylakoid membrane</location>
        <topology evidence="2">Peripheral membrane protein</topology>
        <orientation evidence="2">Stromal side</orientation>
    </subcellularLocation>
</comment>
<geneLocation type="chloroplast"/>
<gene>
    <name evidence="2" type="primary">psaC</name>
</gene>